<gene>
    <name type="primary">yidC</name>
    <name type="ordered locus">TTE2799</name>
</gene>
<reference key="1">
    <citation type="journal article" date="2002" name="Genome Res.">
        <title>A complete sequence of the T. tengcongensis genome.</title>
        <authorList>
            <person name="Bao Q."/>
            <person name="Tian Y."/>
            <person name="Li W."/>
            <person name="Xu Z."/>
            <person name="Xuan Z."/>
            <person name="Hu S."/>
            <person name="Dong W."/>
            <person name="Yang J."/>
            <person name="Chen Y."/>
            <person name="Xue Y."/>
            <person name="Xu Y."/>
            <person name="Lai X."/>
            <person name="Huang L."/>
            <person name="Dong X."/>
            <person name="Ma Y."/>
            <person name="Ling L."/>
            <person name="Tan H."/>
            <person name="Chen R."/>
            <person name="Wang J."/>
            <person name="Yu J."/>
            <person name="Yang H."/>
        </authorList>
    </citation>
    <scope>NUCLEOTIDE SEQUENCE [LARGE SCALE GENOMIC DNA]</scope>
    <source>
        <strain>DSM 15242 / JCM 11007 / NBRC 100824 / MB4</strain>
    </source>
</reference>
<evidence type="ECO:0000250" key="1"/>
<evidence type="ECO:0000255" key="2"/>
<evidence type="ECO:0000305" key="3"/>
<accession>Q8R6K6</accession>
<proteinExistence type="inferred from homology"/>
<organism>
    <name type="scientific">Caldanaerobacter subterraneus subsp. tengcongensis (strain DSM 15242 / JCM 11007 / NBRC 100824 / MB4)</name>
    <name type="common">Thermoanaerobacter tengcongensis</name>
    <dbReference type="NCBI Taxonomy" id="273068"/>
    <lineage>
        <taxon>Bacteria</taxon>
        <taxon>Bacillati</taxon>
        <taxon>Bacillota</taxon>
        <taxon>Clostridia</taxon>
        <taxon>Thermoanaerobacterales</taxon>
        <taxon>Thermoanaerobacteraceae</taxon>
        <taxon>Caldanaerobacter</taxon>
    </lineage>
</organism>
<name>YIDC_CALS4</name>
<feature type="chain" id="PRO_0000124781" description="Membrane protein insertase YidC">
    <location>
        <begin position="1"/>
        <end position="206"/>
    </location>
</feature>
<feature type="transmembrane region" description="Helical" evidence="2">
    <location>
        <begin position="22"/>
        <end position="42"/>
    </location>
</feature>
<feature type="transmembrane region" description="Helical" evidence="2">
    <location>
        <begin position="88"/>
        <end position="108"/>
    </location>
</feature>
<feature type="transmembrane region" description="Helical" evidence="2">
    <location>
        <begin position="130"/>
        <end position="150"/>
    </location>
</feature>
<feature type="transmembrane region" description="Helical" evidence="2">
    <location>
        <begin position="160"/>
        <end position="180"/>
    </location>
</feature>
<dbReference type="EMBL" id="AE008691">
    <property type="protein sequence ID" value="AAM25902.1"/>
    <property type="molecule type" value="Genomic_DNA"/>
</dbReference>
<dbReference type="RefSeq" id="WP_011026760.1">
    <property type="nucleotide sequence ID" value="NC_003869.1"/>
</dbReference>
<dbReference type="SMR" id="Q8R6K6"/>
<dbReference type="STRING" id="273068.TTE2799"/>
<dbReference type="KEGG" id="tte:TTE2799"/>
<dbReference type="eggNOG" id="COG0706">
    <property type="taxonomic scope" value="Bacteria"/>
</dbReference>
<dbReference type="HOGENOM" id="CLU_036138_4_2_9"/>
<dbReference type="OrthoDB" id="9780552at2"/>
<dbReference type="Proteomes" id="UP000000555">
    <property type="component" value="Chromosome"/>
</dbReference>
<dbReference type="GO" id="GO:0005886">
    <property type="term" value="C:plasma membrane"/>
    <property type="evidence" value="ECO:0007669"/>
    <property type="project" value="UniProtKB-SubCell"/>
</dbReference>
<dbReference type="GO" id="GO:0032977">
    <property type="term" value="F:membrane insertase activity"/>
    <property type="evidence" value="ECO:0007669"/>
    <property type="project" value="InterPro"/>
</dbReference>
<dbReference type="GO" id="GO:0051205">
    <property type="term" value="P:protein insertion into membrane"/>
    <property type="evidence" value="ECO:0007669"/>
    <property type="project" value="TreeGrafter"/>
</dbReference>
<dbReference type="GO" id="GO:0015031">
    <property type="term" value="P:protein transport"/>
    <property type="evidence" value="ECO:0007669"/>
    <property type="project" value="UniProtKB-KW"/>
</dbReference>
<dbReference type="CDD" id="cd20070">
    <property type="entry name" value="5TM_YidC_Alb3"/>
    <property type="match status" value="1"/>
</dbReference>
<dbReference type="InterPro" id="IPR001708">
    <property type="entry name" value="YidC/ALB3/OXA1/COX18"/>
</dbReference>
<dbReference type="InterPro" id="IPR028055">
    <property type="entry name" value="YidC/Oxa/ALB_C"/>
</dbReference>
<dbReference type="InterPro" id="IPR047196">
    <property type="entry name" value="YidC_ALB_C"/>
</dbReference>
<dbReference type="NCBIfam" id="TIGR03592">
    <property type="entry name" value="yidC_oxa1_cterm"/>
    <property type="match status" value="1"/>
</dbReference>
<dbReference type="PANTHER" id="PTHR12428:SF65">
    <property type="entry name" value="CYTOCHROME C OXIDASE ASSEMBLY PROTEIN COX18, MITOCHONDRIAL"/>
    <property type="match status" value="1"/>
</dbReference>
<dbReference type="PANTHER" id="PTHR12428">
    <property type="entry name" value="OXA1"/>
    <property type="match status" value="1"/>
</dbReference>
<dbReference type="Pfam" id="PF02096">
    <property type="entry name" value="60KD_IMP"/>
    <property type="match status" value="1"/>
</dbReference>
<dbReference type="PRINTS" id="PR00701">
    <property type="entry name" value="60KDINNERMP"/>
</dbReference>
<dbReference type="PRINTS" id="PR01900">
    <property type="entry name" value="YIDCPROTEIN"/>
</dbReference>
<protein>
    <recommendedName>
        <fullName>Membrane protein insertase YidC</fullName>
    </recommendedName>
    <alternativeName>
        <fullName>Foldase YidC</fullName>
    </alternativeName>
    <alternativeName>
        <fullName>Membrane integrase YidC</fullName>
    </alternativeName>
    <alternativeName>
        <fullName>Membrane protein YidC</fullName>
    </alternativeName>
</protein>
<comment type="function">
    <text evidence="1">Required for the insertion and/or proper folding and/or complex formation of integral membrane proteins into the membrane. Involved in integration of membrane proteins that insert both dependently and independently of the Sec translocase complex, as well as at least some lipoproteins. Aids folding of multispanning membrane proteins (By similarity).</text>
</comment>
<comment type="subunit">
    <text evidence="1">Interacts with the Sec translocase complex via SecD. Specifically interacts with transmembrane segments of nascent integral membrane proteins during membrane integration (By similarity).</text>
</comment>
<comment type="subcellular location">
    <subcellularLocation>
        <location evidence="1">Cell membrane</location>
        <topology evidence="1">Multi-pass membrane protein</topology>
    </subcellularLocation>
</comment>
<comment type="similarity">
    <text evidence="3">Belongs to the OXA1/ALB3/YidC family. Type 1 subfamily.</text>
</comment>
<sequence length="206" mass="23855">MATIAMYLGQLLEFIHHYVGNYGVAIIVFTVFIRILLLPFYIQQMAMMKKMKEIQPLVEELKKKYGKDPQKLNMETMKLYQEKKINPFGGCLPMLLPLIILWPLFTMLRTYPAFSTASFLWMHSLAERDPYYIIPILATVTTYISSAMVATDKSQNSMNIMMSLFMGWITVTLPAGVGIYWVTSNIFQIVQQYIFMRETKTLKGES</sequence>
<keyword id="KW-1003">Cell membrane</keyword>
<keyword id="KW-0143">Chaperone</keyword>
<keyword id="KW-0472">Membrane</keyword>
<keyword id="KW-0653">Protein transport</keyword>
<keyword id="KW-1185">Reference proteome</keyword>
<keyword id="KW-0812">Transmembrane</keyword>
<keyword id="KW-1133">Transmembrane helix</keyword>
<keyword id="KW-0813">Transport</keyword>